<organism>
    <name type="scientific">Christiangramia forsetii (strain DSM 17595 / CGMCC 1.15422 / KT0803)</name>
    <name type="common">Gramella forsetii</name>
    <dbReference type="NCBI Taxonomy" id="411154"/>
    <lineage>
        <taxon>Bacteria</taxon>
        <taxon>Pseudomonadati</taxon>
        <taxon>Bacteroidota</taxon>
        <taxon>Flavobacteriia</taxon>
        <taxon>Flavobacteriales</taxon>
        <taxon>Flavobacteriaceae</taxon>
        <taxon>Christiangramia</taxon>
    </lineage>
</organism>
<reference key="1">
    <citation type="journal article" date="2006" name="Environ. Microbiol.">
        <title>Whole genome analysis of the marine Bacteroidetes'Gramella forsetii' reveals adaptations to degradation of polymeric organic matter.</title>
        <authorList>
            <person name="Bauer M."/>
            <person name="Kube M."/>
            <person name="Teeling H."/>
            <person name="Richter M."/>
            <person name="Lombardot T."/>
            <person name="Allers E."/>
            <person name="Wuerdemann C.A."/>
            <person name="Quast C."/>
            <person name="Kuhl H."/>
            <person name="Knaust F."/>
            <person name="Woebken D."/>
            <person name="Bischof K."/>
            <person name="Mussmann M."/>
            <person name="Choudhuri J.V."/>
            <person name="Meyer F."/>
            <person name="Reinhardt R."/>
            <person name="Amann R.I."/>
            <person name="Gloeckner F.O."/>
        </authorList>
    </citation>
    <scope>NUCLEOTIDE SEQUENCE [LARGE SCALE GENOMIC DNA]</scope>
    <source>
        <strain>DSM 17595 / CGMCC 1.15422 / KT0803</strain>
    </source>
</reference>
<gene>
    <name evidence="1" type="primary">infA</name>
    <name type="ordered locus">GFO_2818</name>
</gene>
<dbReference type="EMBL" id="CU207366">
    <property type="protein sequence ID" value="CAL67772.1"/>
    <property type="molecule type" value="Genomic_DNA"/>
</dbReference>
<dbReference type="RefSeq" id="WP_011710675.1">
    <property type="nucleotide sequence ID" value="NC_008571.1"/>
</dbReference>
<dbReference type="SMR" id="A0M577"/>
<dbReference type="STRING" id="411154.GFO_2818"/>
<dbReference type="KEGG" id="gfo:GFO_2818"/>
<dbReference type="eggNOG" id="COG0361">
    <property type="taxonomic scope" value="Bacteria"/>
</dbReference>
<dbReference type="HOGENOM" id="CLU_151267_1_0_10"/>
<dbReference type="OrthoDB" id="9803250at2"/>
<dbReference type="Proteomes" id="UP000000755">
    <property type="component" value="Chromosome"/>
</dbReference>
<dbReference type="GO" id="GO:0005829">
    <property type="term" value="C:cytosol"/>
    <property type="evidence" value="ECO:0007669"/>
    <property type="project" value="TreeGrafter"/>
</dbReference>
<dbReference type="GO" id="GO:0043022">
    <property type="term" value="F:ribosome binding"/>
    <property type="evidence" value="ECO:0007669"/>
    <property type="project" value="UniProtKB-UniRule"/>
</dbReference>
<dbReference type="GO" id="GO:0019843">
    <property type="term" value="F:rRNA binding"/>
    <property type="evidence" value="ECO:0007669"/>
    <property type="project" value="UniProtKB-UniRule"/>
</dbReference>
<dbReference type="GO" id="GO:0003743">
    <property type="term" value="F:translation initiation factor activity"/>
    <property type="evidence" value="ECO:0007669"/>
    <property type="project" value="UniProtKB-UniRule"/>
</dbReference>
<dbReference type="CDD" id="cd04451">
    <property type="entry name" value="S1_IF1"/>
    <property type="match status" value="1"/>
</dbReference>
<dbReference type="FunFam" id="2.40.50.140:FF:000002">
    <property type="entry name" value="Translation initiation factor IF-1"/>
    <property type="match status" value="1"/>
</dbReference>
<dbReference type="Gene3D" id="2.40.50.140">
    <property type="entry name" value="Nucleic acid-binding proteins"/>
    <property type="match status" value="1"/>
</dbReference>
<dbReference type="HAMAP" id="MF_00075">
    <property type="entry name" value="IF_1"/>
    <property type="match status" value="1"/>
</dbReference>
<dbReference type="InterPro" id="IPR012340">
    <property type="entry name" value="NA-bd_OB-fold"/>
</dbReference>
<dbReference type="InterPro" id="IPR006196">
    <property type="entry name" value="RNA-binding_domain_S1_IF1"/>
</dbReference>
<dbReference type="InterPro" id="IPR004368">
    <property type="entry name" value="TIF_IF1"/>
</dbReference>
<dbReference type="NCBIfam" id="TIGR00008">
    <property type="entry name" value="infA"/>
    <property type="match status" value="1"/>
</dbReference>
<dbReference type="PANTHER" id="PTHR33370">
    <property type="entry name" value="TRANSLATION INITIATION FACTOR IF-1, CHLOROPLASTIC"/>
    <property type="match status" value="1"/>
</dbReference>
<dbReference type="PANTHER" id="PTHR33370:SF1">
    <property type="entry name" value="TRANSLATION INITIATION FACTOR IF-1, CHLOROPLASTIC"/>
    <property type="match status" value="1"/>
</dbReference>
<dbReference type="Pfam" id="PF01176">
    <property type="entry name" value="eIF-1a"/>
    <property type="match status" value="1"/>
</dbReference>
<dbReference type="SUPFAM" id="SSF50249">
    <property type="entry name" value="Nucleic acid-binding proteins"/>
    <property type="match status" value="1"/>
</dbReference>
<dbReference type="PROSITE" id="PS50832">
    <property type="entry name" value="S1_IF1_TYPE"/>
    <property type="match status" value="1"/>
</dbReference>
<keyword id="KW-0963">Cytoplasm</keyword>
<keyword id="KW-0396">Initiation factor</keyword>
<keyword id="KW-0648">Protein biosynthesis</keyword>
<keyword id="KW-0694">RNA-binding</keyword>
<keyword id="KW-0699">rRNA-binding</keyword>
<feature type="chain" id="PRO_0000338834" description="Translation initiation factor IF-1">
    <location>
        <begin position="1"/>
        <end position="71"/>
    </location>
</feature>
<feature type="domain" description="S1-like" evidence="1">
    <location>
        <begin position="1"/>
        <end position="71"/>
    </location>
</feature>
<proteinExistence type="inferred from homology"/>
<evidence type="ECO:0000255" key="1">
    <source>
        <dbReference type="HAMAP-Rule" id="MF_00075"/>
    </source>
</evidence>
<sequence length="71" mass="8094">MAKQAAIEQDGTIIEALSNAMFRVELENGHVVTAHISGKMRMHYIKLLPGDKVKLEMSPYDLTKARITYRY</sequence>
<comment type="function">
    <text evidence="1">One of the essential components for the initiation of protein synthesis. Stabilizes the binding of IF-2 and IF-3 on the 30S subunit to which N-formylmethionyl-tRNA(fMet) subsequently binds. Helps modulate mRNA selection, yielding the 30S pre-initiation complex (PIC). Upon addition of the 50S ribosomal subunit IF-1, IF-2 and IF-3 are released leaving the mature 70S translation initiation complex.</text>
</comment>
<comment type="subunit">
    <text evidence="1">Component of the 30S ribosomal translation pre-initiation complex which assembles on the 30S ribosome in the order IF-2 and IF-3, IF-1 and N-formylmethionyl-tRNA(fMet); mRNA recruitment can occur at any time during PIC assembly.</text>
</comment>
<comment type="subcellular location">
    <subcellularLocation>
        <location evidence="1">Cytoplasm</location>
    </subcellularLocation>
</comment>
<comment type="similarity">
    <text evidence="1">Belongs to the IF-1 family.</text>
</comment>
<protein>
    <recommendedName>
        <fullName evidence="1">Translation initiation factor IF-1</fullName>
    </recommendedName>
</protein>
<accession>A0M577</accession>
<name>IF1_CHRFK</name>